<sequence>MTDQLIIFDTTLRDGEQSPGASMTRDEKMRIAKQLERLKVDVIEAGFPASSNGDFEAVKAIADIIKESTVCGLSRANDRDISRAAEALKGAARGRIHTFIATSPLHMEKKLRMSPDEVHEQAKLAVRFARNLVSDVEFSPEDGYRSDPDFLCRVLETVINEGATTINVPDTVGYAIPELYGNFIKMLRERVPNSDKAIWSVHCHNDLGMAVANSLAGVKIGGARQVECTINGLGERAGNCSLEEVVMAVKTRRDYFGLDLNIDTTHIVAASRMVSQTTGFVVQPNKAVVGANAFAHASGIHQDGVLKARDTYEIMRAEDVGWAANKIVLGKLSGRNAFKQRLQELGVTMASEADINAAFLRFKELADRKSEIFDEDILALVSAEEHSNVDEQFAFVSLSQHSETGERPQAKVVFTVQGKEVTGESDGNGPVDASLKAIESHVKSGAEMVLYSVNAISGSTESQGEVTVRLQNAGRVVNGVGADPDIVVASAKAYLSALNKLQSQAEKVAAQG</sequence>
<protein>
    <recommendedName>
        <fullName evidence="1">2-isopropylmalate synthase</fullName>
        <ecNumber evidence="1">2.3.3.13</ecNumber>
    </recommendedName>
    <alternativeName>
        <fullName evidence="1">Alpha-IPM synthase</fullName>
    </alternativeName>
    <alternativeName>
        <fullName evidence="1">Alpha-isopropylmalate synthase</fullName>
    </alternativeName>
</protein>
<accession>C5CYP2</accession>
<organism>
    <name type="scientific">Variovorax paradoxus (strain S110)</name>
    <dbReference type="NCBI Taxonomy" id="543728"/>
    <lineage>
        <taxon>Bacteria</taxon>
        <taxon>Pseudomonadati</taxon>
        <taxon>Pseudomonadota</taxon>
        <taxon>Betaproteobacteria</taxon>
        <taxon>Burkholderiales</taxon>
        <taxon>Comamonadaceae</taxon>
        <taxon>Variovorax</taxon>
    </lineage>
</organism>
<evidence type="ECO:0000255" key="1">
    <source>
        <dbReference type="HAMAP-Rule" id="MF_01025"/>
    </source>
</evidence>
<keyword id="KW-0028">Amino-acid biosynthesis</keyword>
<keyword id="KW-0100">Branched-chain amino acid biosynthesis</keyword>
<keyword id="KW-0963">Cytoplasm</keyword>
<keyword id="KW-0432">Leucine biosynthesis</keyword>
<keyword id="KW-0464">Manganese</keyword>
<keyword id="KW-0479">Metal-binding</keyword>
<keyword id="KW-0808">Transferase</keyword>
<feature type="chain" id="PRO_1000213324" description="2-isopropylmalate synthase">
    <location>
        <begin position="1"/>
        <end position="512"/>
    </location>
</feature>
<feature type="domain" description="Pyruvate carboxyltransferase" evidence="1">
    <location>
        <begin position="5"/>
        <end position="268"/>
    </location>
</feature>
<feature type="region of interest" description="Regulatory domain" evidence="1">
    <location>
        <begin position="394"/>
        <end position="512"/>
    </location>
</feature>
<feature type="binding site" evidence="1">
    <location>
        <position position="14"/>
    </location>
    <ligand>
        <name>Mn(2+)</name>
        <dbReference type="ChEBI" id="CHEBI:29035"/>
    </ligand>
</feature>
<feature type="binding site" evidence="1">
    <location>
        <position position="202"/>
    </location>
    <ligand>
        <name>Mn(2+)</name>
        <dbReference type="ChEBI" id="CHEBI:29035"/>
    </ligand>
</feature>
<feature type="binding site" evidence="1">
    <location>
        <position position="204"/>
    </location>
    <ligand>
        <name>Mn(2+)</name>
        <dbReference type="ChEBI" id="CHEBI:29035"/>
    </ligand>
</feature>
<feature type="binding site" evidence="1">
    <location>
        <position position="239"/>
    </location>
    <ligand>
        <name>Mn(2+)</name>
        <dbReference type="ChEBI" id="CHEBI:29035"/>
    </ligand>
</feature>
<gene>
    <name evidence="1" type="primary">leuA</name>
    <name type="ordered locus">Vapar_2374</name>
</gene>
<proteinExistence type="inferred from homology"/>
<comment type="function">
    <text evidence="1">Catalyzes the condensation of the acetyl group of acetyl-CoA with 3-methyl-2-oxobutanoate (2-ketoisovalerate) to form 3-carboxy-3-hydroxy-4-methylpentanoate (2-isopropylmalate).</text>
</comment>
<comment type="catalytic activity">
    <reaction evidence="1">
        <text>3-methyl-2-oxobutanoate + acetyl-CoA + H2O = (2S)-2-isopropylmalate + CoA + H(+)</text>
        <dbReference type="Rhea" id="RHEA:21524"/>
        <dbReference type="ChEBI" id="CHEBI:1178"/>
        <dbReference type="ChEBI" id="CHEBI:11851"/>
        <dbReference type="ChEBI" id="CHEBI:15377"/>
        <dbReference type="ChEBI" id="CHEBI:15378"/>
        <dbReference type="ChEBI" id="CHEBI:57287"/>
        <dbReference type="ChEBI" id="CHEBI:57288"/>
        <dbReference type="EC" id="2.3.3.13"/>
    </reaction>
</comment>
<comment type="cofactor">
    <cofactor evidence="1">
        <name>Mn(2+)</name>
        <dbReference type="ChEBI" id="CHEBI:29035"/>
    </cofactor>
</comment>
<comment type="pathway">
    <text evidence="1">Amino-acid biosynthesis; L-leucine biosynthesis; L-leucine from 3-methyl-2-oxobutanoate: step 1/4.</text>
</comment>
<comment type="subunit">
    <text evidence="1">Homodimer.</text>
</comment>
<comment type="subcellular location">
    <subcellularLocation>
        <location evidence="1">Cytoplasm</location>
    </subcellularLocation>
</comment>
<comment type="similarity">
    <text evidence="1">Belongs to the alpha-IPM synthase/homocitrate synthase family. LeuA type 1 subfamily.</text>
</comment>
<dbReference type="EC" id="2.3.3.13" evidence="1"/>
<dbReference type="EMBL" id="CP001635">
    <property type="protein sequence ID" value="ACS19001.1"/>
    <property type="molecule type" value="Genomic_DNA"/>
</dbReference>
<dbReference type="SMR" id="C5CYP2"/>
<dbReference type="STRING" id="543728.Vapar_2374"/>
<dbReference type="KEGG" id="vap:Vapar_2374"/>
<dbReference type="eggNOG" id="COG0119">
    <property type="taxonomic scope" value="Bacteria"/>
</dbReference>
<dbReference type="HOGENOM" id="CLU_022158_0_1_4"/>
<dbReference type="OrthoDB" id="9803573at2"/>
<dbReference type="UniPathway" id="UPA00048">
    <property type="reaction ID" value="UER00070"/>
</dbReference>
<dbReference type="GO" id="GO:0005829">
    <property type="term" value="C:cytosol"/>
    <property type="evidence" value="ECO:0007669"/>
    <property type="project" value="TreeGrafter"/>
</dbReference>
<dbReference type="GO" id="GO:0003852">
    <property type="term" value="F:2-isopropylmalate synthase activity"/>
    <property type="evidence" value="ECO:0007669"/>
    <property type="project" value="UniProtKB-UniRule"/>
</dbReference>
<dbReference type="GO" id="GO:0003985">
    <property type="term" value="F:acetyl-CoA C-acetyltransferase activity"/>
    <property type="evidence" value="ECO:0007669"/>
    <property type="project" value="UniProtKB-UniRule"/>
</dbReference>
<dbReference type="GO" id="GO:0030145">
    <property type="term" value="F:manganese ion binding"/>
    <property type="evidence" value="ECO:0007669"/>
    <property type="project" value="UniProtKB-UniRule"/>
</dbReference>
<dbReference type="GO" id="GO:0009098">
    <property type="term" value="P:L-leucine biosynthetic process"/>
    <property type="evidence" value="ECO:0007669"/>
    <property type="project" value="UniProtKB-UniRule"/>
</dbReference>
<dbReference type="CDD" id="cd07940">
    <property type="entry name" value="DRE_TIM_IPMS"/>
    <property type="match status" value="1"/>
</dbReference>
<dbReference type="FunFam" id="1.10.238.260:FF:000001">
    <property type="entry name" value="2-isopropylmalate synthase"/>
    <property type="match status" value="1"/>
</dbReference>
<dbReference type="FunFam" id="3.20.20.70:FF:000010">
    <property type="entry name" value="2-isopropylmalate synthase"/>
    <property type="match status" value="1"/>
</dbReference>
<dbReference type="Gene3D" id="1.10.238.260">
    <property type="match status" value="1"/>
</dbReference>
<dbReference type="Gene3D" id="3.30.160.270">
    <property type="match status" value="1"/>
</dbReference>
<dbReference type="Gene3D" id="3.20.20.70">
    <property type="entry name" value="Aldolase class I"/>
    <property type="match status" value="1"/>
</dbReference>
<dbReference type="HAMAP" id="MF_01025">
    <property type="entry name" value="LeuA_type1"/>
    <property type="match status" value="1"/>
</dbReference>
<dbReference type="InterPro" id="IPR050073">
    <property type="entry name" value="2-IPM_HCS-like"/>
</dbReference>
<dbReference type="InterPro" id="IPR013709">
    <property type="entry name" value="2-isopropylmalate_synth_dimer"/>
</dbReference>
<dbReference type="InterPro" id="IPR002034">
    <property type="entry name" value="AIPM/Hcit_synth_CS"/>
</dbReference>
<dbReference type="InterPro" id="IPR013785">
    <property type="entry name" value="Aldolase_TIM"/>
</dbReference>
<dbReference type="InterPro" id="IPR054691">
    <property type="entry name" value="LeuA/HCS_post-cat"/>
</dbReference>
<dbReference type="InterPro" id="IPR036230">
    <property type="entry name" value="LeuA_allosteric_dom_sf"/>
</dbReference>
<dbReference type="InterPro" id="IPR005671">
    <property type="entry name" value="LeuA_bact_synth"/>
</dbReference>
<dbReference type="InterPro" id="IPR000891">
    <property type="entry name" value="PYR_CT"/>
</dbReference>
<dbReference type="NCBIfam" id="TIGR00973">
    <property type="entry name" value="leuA_bact"/>
    <property type="match status" value="1"/>
</dbReference>
<dbReference type="NCBIfam" id="NF002086">
    <property type="entry name" value="PRK00915.1-3"/>
    <property type="match status" value="1"/>
</dbReference>
<dbReference type="NCBIfam" id="NF002087">
    <property type="entry name" value="PRK00915.1-4"/>
    <property type="match status" value="1"/>
</dbReference>
<dbReference type="PANTHER" id="PTHR10277:SF9">
    <property type="entry name" value="2-ISOPROPYLMALATE SYNTHASE 1, CHLOROPLASTIC-RELATED"/>
    <property type="match status" value="1"/>
</dbReference>
<dbReference type="PANTHER" id="PTHR10277">
    <property type="entry name" value="HOMOCITRATE SYNTHASE-RELATED"/>
    <property type="match status" value="1"/>
</dbReference>
<dbReference type="Pfam" id="PF22617">
    <property type="entry name" value="HCS_D2"/>
    <property type="match status" value="1"/>
</dbReference>
<dbReference type="Pfam" id="PF00682">
    <property type="entry name" value="HMGL-like"/>
    <property type="match status" value="1"/>
</dbReference>
<dbReference type="Pfam" id="PF08502">
    <property type="entry name" value="LeuA_dimer"/>
    <property type="match status" value="1"/>
</dbReference>
<dbReference type="SMART" id="SM00917">
    <property type="entry name" value="LeuA_dimer"/>
    <property type="match status" value="1"/>
</dbReference>
<dbReference type="SUPFAM" id="SSF110921">
    <property type="entry name" value="2-isopropylmalate synthase LeuA, allosteric (dimerisation) domain"/>
    <property type="match status" value="1"/>
</dbReference>
<dbReference type="SUPFAM" id="SSF51569">
    <property type="entry name" value="Aldolase"/>
    <property type="match status" value="1"/>
</dbReference>
<dbReference type="PROSITE" id="PS00815">
    <property type="entry name" value="AIPM_HOMOCIT_SYNTH_1"/>
    <property type="match status" value="1"/>
</dbReference>
<dbReference type="PROSITE" id="PS00816">
    <property type="entry name" value="AIPM_HOMOCIT_SYNTH_2"/>
    <property type="match status" value="1"/>
</dbReference>
<dbReference type="PROSITE" id="PS50991">
    <property type="entry name" value="PYR_CT"/>
    <property type="match status" value="1"/>
</dbReference>
<name>LEU1_VARPS</name>
<reference key="1">
    <citation type="journal article" date="2011" name="J. Bacteriol.">
        <title>Complete genome sequence of the metabolically versatile plant growth-promoting endophyte, Variovorax paradoxus S110.</title>
        <authorList>
            <person name="Han J.I."/>
            <person name="Choi H.K."/>
            <person name="Lee S.W."/>
            <person name="Orwin P.M."/>
            <person name="Kim J."/>
            <person name="Laroe S.L."/>
            <person name="Kim T.G."/>
            <person name="O'Neil J."/>
            <person name="Leadbetter J.R."/>
            <person name="Lee S.Y."/>
            <person name="Hur C.G."/>
            <person name="Spain J.C."/>
            <person name="Ovchinnikova G."/>
            <person name="Goodwin L."/>
            <person name="Han C."/>
        </authorList>
    </citation>
    <scope>NUCLEOTIDE SEQUENCE [LARGE SCALE GENOMIC DNA]</scope>
    <source>
        <strain>S110</strain>
    </source>
</reference>